<keyword id="KW-0238">DNA-binding</keyword>
<keyword id="KW-0479">Metal-binding</keyword>
<keyword id="KW-0539">Nucleus</keyword>
<keyword id="KW-1267">Proteomics identification</keyword>
<keyword id="KW-1185">Reference proteome</keyword>
<keyword id="KW-0677">Repeat</keyword>
<keyword id="KW-0804">Transcription</keyword>
<keyword id="KW-0805">Transcription regulation</keyword>
<keyword id="KW-0862">Zinc</keyword>
<keyword id="KW-0863">Zinc-finger</keyword>
<accession>Q96ND8</accession>
<accession>O14850</accession>
<accession>Q2NKK3</accession>
<sequence length="569" mass="66033">MSKDLVTFGDVAVNFSQEEWEWLNPAQRNLYRKVMLENYRSLVSLGVSVSKPDVISLLEQGKEPWMVKKEGTRGPCPDWEYVFKNSEFSSKQETYEESSKVVTVGARHLSYSLDYPSLREDCQSEDWYKNQLGSQEVHLSQLIITHKEILPEVQNKEYNKSWQTFHQDTIFDIQQSFPTKEKAHKHEPQKKSYRKKSVEMKHRKVYVEKKLLKCNDCEKVFNQSSSLTLHQRIHTGEKPYACVECGKTFSQSANLAQHKRIHTGEKPYECKECRKAFSQNAHLAQHQRVHTGEKPYQCKECKKAFSQIAHLTQHQRVHTGERPFECIECGKAFSNGSFLAQHQRIHTGEKPYVCNVCGKAFSHRGYLIVHQRIHTGERPYECKECRKAFSQYAHLAQHQRVHTGEKPYECKVCRKAFSQIAYLDQHQRVHTGEKPYECIECGKAFSNSSSLAQHQRSHTGEKPYMCKECRKTFSQNAGLAQHQRIHTGEKPYECNVCGKAFSYSGSLTLHQRIHTGERPYECKDCRKSFRQRAHLAHHERIHTMESFLTLSSPSPSTSNQLPRPVGFIS</sequence>
<dbReference type="EMBL" id="AK055592">
    <property type="protein sequence ID" value="BAB70964.1"/>
    <property type="molecule type" value="mRNA"/>
</dbReference>
<dbReference type="EMBL" id="BC111772">
    <property type="protein sequence ID" value="AAI11773.1"/>
    <property type="molecule type" value="mRNA"/>
</dbReference>
<dbReference type="EMBL" id="AF024698">
    <property type="protein sequence ID" value="AAB81088.1"/>
    <property type="molecule type" value="mRNA"/>
</dbReference>
<dbReference type="CCDS" id="CCDS12943.1"/>
<dbReference type="RefSeq" id="NP_001153332.1">
    <property type="nucleotide sequence ID" value="NM_001159860.2"/>
</dbReference>
<dbReference type="RefSeq" id="NP_001153333.1">
    <property type="nucleotide sequence ID" value="NM_001159861.2"/>
</dbReference>
<dbReference type="RefSeq" id="NP_689691.2">
    <property type="nucleotide sequence ID" value="NM_152478.3"/>
</dbReference>
<dbReference type="RefSeq" id="XP_011524819.1">
    <property type="nucleotide sequence ID" value="XM_011526517.3"/>
</dbReference>
<dbReference type="RefSeq" id="XP_016881839.1">
    <property type="nucleotide sequence ID" value="XM_017026350.2"/>
</dbReference>
<dbReference type="RefSeq" id="XP_024307151.1">
    <property type="nucleotide sequence ID" value="XM_024451383.2"/>
</dbReference>
<dbReference type="RefSeq" id="XP_054175903.1">
    <property type="nucleotide sequence ID" value="XM_054319928.1"/>
</dbReference>
<dbReference type="RefSeq" id="XP_054175904.1">
    <property type="nucleotide sequence ID" value="XM_054319929.1"/>
</dbReference>
<dbReference type="RefSeq" id="XP_054175905.1">
    <property type="nucleotide sequence ID" value="XM_054319930.1"/>
</dbReference>
<dbReference type="SMR" id="Q96ND8"/>
<dbReference type="BioGRID" id="127105">
    <property type="interactions" value="3"/>
</dbReference>
<dbReference type="FunCoup" id="Q96ND8">
    <property type="interactions" value="10"/>
</dbReference>
<dbReference type="IntAct" id="Q96ND8">
    <property type="interactions" value="2"/>
</dbReference>
<dbReference type="MINT" id="Q96ND8"/>
<dbReference type="STRING" id="9606.ENSP00000388502"/>
<dbReference type="GlyGen" id="Q96ND8">
    <property type="glycosylation" value="1 site, 1 O-linked glycan (1 site)"/>
</dbReference>
<dbReference type="iPTMnet" id="Q96ND8"/>
<dbReference type="PhosphoSitePlus" id="Q96ND8"/>
<dbReference type="BioMuta" id="ZNF583"/>
<dbReference type="DMDM" id="116242861"/>
<dbReference type="jPOST" id="Q96ND8"/>
<dbReference type="MassIVE" id="Q96ND8"/>
<dbReference type="PaxDb" id="9606-ENSP00000388502"/>
<dbReference type="PeptideAtlas" id="Q96ND8"/>
<dbReference type="ProteomicsDB" id="77503"/>
<dbReference type="Antibodypedia" id="33209">
    <property type="antibodies" value="119 antibodies from 18 providers"/>
</dbReference>
<dbReference type="DNASU" id="147949"/>
<dbReference type="Ensembl" id="ENST00000291598.11">
    <property type="protein sequence ID" value="ENSP00000291598.7"/>
    <property type="gene ID" value="ENSG00000198440.9"/>
</dbReference>
<dbReference type="Ensembl" id="ENST00000333201.13">
    <property type="protein sequence ID" value="ENSP00000388502.2"/>
    <property type="gene ID" value="ENSG00000198440.9"/>
</dbReference>
<dbReference type="GeneID" id="147949"/>
<dbReference type="KEGG" id="hsa:147949"/>
<dbReference type="MANE-Select" id="ENST00000333201.13">
    <property type="protein sequence ID" value="ENSP00000388502.2"/>
    <property type="RefSeq nucleotide sequence ID" value="NM_152478.3"/>
    <property type="RefSeq protein sequence ID" value="NP_689691.2"/>
</dbReference>
<dbReference type="UCSC" id="uc002qnc.3">
    <property type="organism name" value="human"/>
</dbReference>
<dbReference type="AGR" id="HGNC:26427"/>
<dbReference type="CTD" id="147949"/>
<dbReference type="DisGeNET" id="147949"/>
<dbReference type="GeneCards" id="ZNF583"/>
<dbReference type="HGNC" id="HGNC:26427">
    <property type="gene designation" value="ZNF583"/>
</dbReference>
<dbReference type="HPA" id="ENSG00000198440">
    <property type="expression patterns" value="Low tissue specificity"/>
</dbReference>
<dbReference type="neXtProt" id="NX_Q96ND8"/>
<dbReference type="OpenTargets" id="ENSG00000198440"/>
<dbReference type="PharmGKB" id="PA134982111"/>
<dbReference type="VEuPathDB" id="HostDB:ENSG00000198440"/>
<dbReference type="eggNOG" id="KOG1721">
    <property type="taxonomic scope" value="Eukaryota"/>
</dbReference>
<dbReference type="GeneTree" id="ENSGT00940000161925"/>
<dbReference type="HOGENOM" id="CLU_002678_44_5_1"/>
<dbReference type="InParanoid" id="Q96ND8"/>
<dbReference type="OMA" id="EYSKSWQ"/>
<dbReference type="OrthoDB" id="9820409at2759"/>
<dbReference type="PAN-GO" id="Q96ND8">
    <property type="GO annotations" value="4 GO annotations based on evolutionary models"/>
</dbReference>
<dbReference type="PhylomeDB" id="Q96ND8"/>
<dbReference type="TreeFam" id="TF341817"/>
<dbReference type="PathwayCommons" id="Q96ND8"/>
<dbReference type="Reactome" id="R-HSA-212436">
    <property type="pathway name" value="Generic Transcription Pathway"/>
</dbReference>
<dbReference type="SignaLink" id="Q96ND8"/>
<dbReference type="BioGRID-ORCS" id="147949">
    <property type="hits" value="10 hits in 1169 CRISPR screens"/>
</dbReference>
<dbReference type="ChiTaRS" id="ZNF583">
    <property type="organism name" value="human"/>
</dbReference>
<dbReference type="GenomeRNAi" id="147949"/>
<dbReference type="Pharos" id="Q96ND8">
    <property type="development level" value="Tdark"/>
</dbReference>
<dbReference type="PRO" id="PR:Q96ND8"/>
<dbReference type="Proteomes" id="UP000005640">
    <property type="component" value="Chromosome 19"/>
</dbReference>
<dbReference type="RNAct" id="Q96ND8">
    <property type="molecule type" value="protein"/>
</dbReference>
<dbReference type="Bgee" id="ENSG00000198440">
    <property type="expression patterns" value="Expressed in primordial germ cell in gonad and 108 other cell types or tissues"/>
</dbReference>
<dbReference type="ExpressionAtlas" id="Q96ND8">
    <property type="expression patterns" value="baseline and differential"/>
</dbReference>
<dbReference type="GO" id="GO:0005634">
    <property type="term" value="C:nucleus"/>
    <property type="evidence" value="ECO:0000318"/>
    <property type="project" value="GO_Central"/>
</dbReference>
<dbReference type="GO" id="GO:0000981">
    <property type="term" value="F:DNA-binding transcription factor activity, RNA polymerase II-specific"/>
    <property type="evidence" value="ECO:0000318"/>
    <property type="project" value="GO_Central"/>
</dbReference>
<dbReference type="GO" id="GO:0000978">
    <property type="term" value="F:RNA polymerase II cis-regulatory region sequence-specific DNA binding"/>
    <property type="evidence" value="ECO:0000318"/>
    <property type="project" value="GO_Central"/>
</dbReference>
<dbReference type="GO" id="GO:0008270">
    <property type="term" value="F:zinc ion binding"/>
    <property type="evidence" value="ECO:0007669"/>
    <property type="project" value="UniProtKB-KW"/>
</dbReference>
<dbReference type="GO" id="GO:0006357">
    <property type="term" value="P:regulation of transcription by RNA polymerase II"/>
    <property type="evidence" value="ECO:0000318"/>
    <property type="project" value="GO_Central"/>
</dbReference>
<dbReference type="CDD" id="cd07765">
    <property type="entry name" value="KRAB_A-box"/>
    <property type="match status" value="1"/>
</dbReference>
<dbReference type="FunFam" id="3.30.160.60:FF:002063">
    <property type="entry name" value="RB associated KRAB zinc finger"/>
    <property type="match status" value="1"/>
</dbReference>
<dbReference type="FunFam" id="3.30.160.60:FF:000478">
    <property type="entry name" value="Zinc finger protein 133"/>
    <property type="match status" value="1"/>
</dbReference>
<dbReference type="FunFam" id="3.30.160.60:FF:000295">
    <property type="entry name" value="zinc finger protein 19"/>
    <property type="match status" value="1"/>
</dbReference>
<dbReference type="FunFam" id="3.30.160.60:FF:002343">
    <property type="entry name" value="Zinc finger protein 33A"/>
    <property type="match status" value="1"/>
</dbReference>
<dbReference type="FunFam" id="3.30.160.60:FF:000101">
    <property type="entry name" value="zinc finger protein 436 isoform X1"/>
    <property type="match status" value="1"/>
</dbReference>
<dbReference type="FunFam" id="3.30.160.60:FF:000238">
    <property type="entry name" value="Zinc finger protein 485"/>
    <property type="match status" value="1"/>
</dbReference>
<dbReference type="FunFam" id="3.30.160.60:FF:000826">
    <property type="entry name" value="Zinc finger protein 570"/>
    <property type="match status" value="2"/>
</dbReference>
<dbReference type="FunFam" id="3.30.160.60:FF:001270">
    <property type="entry name" value="zinc finger protein 583 isoform X1"/>
    <property type="match status" value="4"/>
</dbReference>
<dbReference type="Gene3D" id="6.10.140.140">
    <property type="match status" value="1"/>
</dbReference>
<dbReference type="Gene3D" id="3.30.160.60">
    <property type="entry name" value="Classic Zinc Finger"/>
    <property type="match status" value="12"/>
</dbReference>
<dbReference type="InterPro" id="IPR001909">
    <property type="entry name" value="KRAB"/>
</dbReference>
<dbReference type="InterPro" id="IPR036051">
    <property type="entry name" value="KRAB_dom_sf"/>
</dbReference>
<dbReference type="InterPro" id="IPR036236">
    <property type="entry name" value="Znf_C2H2_sf"/>
</dbReference>
<dbReference type="InterPro" id="IPR013087">
    <property type="entry name" value="Znf_C2H2_type"/>
</dbReference>
<dbReference type="PANTHER" id="PTHR24399:SF54">
    <property type="entry name" value="GASTRULA ZINC FINGER PROTEIN XLCGF26.1-LIKE-RELATED"/>
    <property type="match status" value="1"/>
</dbReference>
<dbReference type="PANTHER" id="PTHR24399">
    <property type="entry name" value="ZINC FINGER AND BTB DOMAIN-CONTAINING"/>
    <property type="match status" value="1"/>
</dbReference>
<dbReference type="Pfam" id="PF01352">
    <property type="entry name" value="KRAB"/>
    <property type="match status" value="1"/>
</dbReference>
<dbReference type="Pfam" id="PF00096">
    <property type="entry name" value="zf-C2H2"/>
    <property type="match status" value="12"/>
</dbReference>
<dbReference type="SMART" id="SM00349">
    <property type="entry name" value="KRAB"/>
    <property type="match status" value="1"/>
</dbReference>
<dbReference type="SMART" id="SM00355">
    <property type="entry name" value="ZnF_C2H2"/>
    <property type="match status" value="12"/>
</dbReference>
<dbReference type="SUPFAM" id="SSF57667">
    <property type="entry name" value="beta-beta-alpha zinc fingers"/>
    <property type="match status" value="7"/>
</dbReference>
<dbReference type="SUPFAM" id="SSF109640">
    <property type="entry name" value="KRAB domain (Kruppel-associated box)"/>
    <property type="match status" value="1"/>
</dbReference>
<dbReference type="PROSITE" id="PS50805">
    <property type="entry name" value="KRAB"/>
    <property type="match status" value="1"/>
</dbReference>
<dbReference type="PROSITE" id="PS00028">
    <property type="entry name" value="ZINC_FINGER_C2H2_1"/>
    <property type="match status" value="12"/>
</dbReference>
<dbReference type="PROSITE" id="PS50157">
    <property type="entry name" value="ZINC_FINGER_C2H2_2"/>
    <property type="match status" value="12"/>
</dbReference>
<name>ZN583_HUMAN</name>
<organism>
    <name type="scientific">Homo sapiens</name>
    <name type="common">Human</name>
    <dbReference type="NCBI Taxonomy" id="9606"/>
    <lineage>
        <taxon>Eukaryota</taxon>
        <taxon>Metazoa</taxon>
        <taxon>Chordata</taxon>
        <taxon>Craniata</taxon>
        <taxon>Vertebrata</taxon>
        <taxon>Euteleostomi</taxon>
        <taxon>Mammalia</taxon>
        <taxon>Eutheria</taxon>
        <taxon>Euarchontoglires</taxon>
        <taxon>Primates</taxon>
        <taxon>Haplorrhini</taxon>
        <taxon>Catarrhini</taxon>
        <taxon>Hominidae</taxon>
        <taxon>Homo</taxon>
    </lineage>
</organism>
<reference key="1">
    <citation type="journal article" date="2004" name="Nat. Genet.">
        <title>Complete sequencing and characterization of 21,243 full-length human cDNAs.</title>
        <authorList>
            <person name="Ota T."/>
            <person name="Suzuki Y."/>
            <person name="Nishikawa T."/>
            <person name="Otsuki T."/>
            <person name="Sugiyama T."/>
            <person name="Irie R."/>
            <person name="Wakamatsu A."/>
            <person name="Hayashi K."/>
            <person name="Sato H."/>
            <person name="Nagai K."/>
            <person name="Kimura K."/>
            <person name="Makita H."/>
            <person name="Sekine M."/>
            <person name="Obayashi M."/>
            <person name="Nishi T."/>
            <person name="Shibahara T."/>
            <person name="Tanaka T."/>
            <person name="Ishii S."/>
            <person name="Yamamoto J."/>
            <person name="Saito K."/>
            <person name="Kawai Y."/>
            <person name="Isono Y."/>
            <person name="Nakamura Y."/>
            <person name="Nagahari K."/>
            <person name="Murakami K."/>
            <person name="Yasuda T."/>
            <person name="Iwayanagi T."/>
            <person name="Wagatsuma M."/>
            <person name="Shiratori A."/>
            <person name="Sudo H."/>
            <person name="Hosoiri T."/>
            <person name="Kaku Y."/>
            <person name="Kodaira H."/>
            <person name="Kondo H."/>
            <person name="Sugawara M."/>
            <person name="Takahashi M."/>
            <person name="Kanda K."/>
            <person name="Yokoi T."/>
            <person name="Furuya T."/>
            <person name="Kikkawa E."/>
            <person name="Omura Y."/>
            <person name="Abe K."/>
            <person name="Kamihara K."/>
            <person name="Katsuta N."/>
            <person name="Sato K."/>
            <person name="Tanikawa M."/>
            <person name="Yamazaki M."/>
            <person name="Ninomiya K."/>
            <person name="Ishibashi T."/>
            <person name="Yamashita H."/>
            <person name="Murakawa K."/>
            <person name="Fujimori K."/>
            <person name="Tanai H."/>
            <person name="Kimata M."/>
            <person name="Watanabe M."/>
            <person name="Hiraoka S."/>
            <person name="Chiba Y."/>
            <person name="Ishida S."/>
            <person name="Ono Y."/>
            <person name="Takiguchi S."/>
            <person name="Watanabe S."/>
            <person name="Yosida M."/>
            <person name="Hotuta T."/>
            <person name="Kusano J."/>
            <person name="Kanehori K."/>
            <person name="Takahashi-Fujii A."/>
            <person name="Hara H."/>
            <person name="Tanase T.-O."/>
            <person name="Nomura Y."/>
            <person name="Togiya S."/>
            <person name="Komai F."/>
            <person name="Hara R."/>
            <person name="Takeuchi K."/>
            <person name="Arita M."/>
            <person name="Imose N."/>
            <person name="Musashino K."/>
            <person name="Yuuki H."/>
            <person name="Oshima A."/>
            <person name="Sasaki N."/>
            <person name="Aotsuka S."/>
            <person name="Yoshikawa Y."/>
            <person name="Matsunawa H."/>
            <person name="Ichihara T."/>
            <person name="Shiohata N."/>
            <person name="Sano S."/>
            <person name="Moriya S."/>
            <person name="Momiyama H."/>
            <person name="Satoh N."/>
            <person name="Takami S."/>
            <person name="Terashima Y."/>
            <person name="Suzuki O."/>
            <person name="Nakagawa S."/>
            <person name="Senoh A."/>
            <person name="Mizoguchi H."/>
            <person name="Goto Y."/>
            <person name="Shimizu F."/>
            <person name="Wakebe H."/>
            <person name="Hishigaki H."/>
            <person name="Watanabe T."/>
            <person name="Sugiyama A."/>
            <person name="Takemoto M."/>
            <person name="Kawakami B."/>
            <person name="Yamazaki M."/>
            <person name="Watanabe K."/>
            <person name="Kumagai A."/>
            <person name="Itakura S."/>
            <person name="Fukuzumi Y."/>
            <person name="Fujimori Y."/>
            <person name="Komiyama M."/>
            <person name="Tashiro H."/>
            <person name="Tanigami A."/>
            <person name="Fujiwara T."/>
            <person name="Ono T."/>
            <person name="Yamada K."/>
            <person name="Fujii Y."/>
            <person name="Ozaki K."/>
            <person name="Hirao M."/>
            <person name="Ohmori Y."/>
            <person name="Kawabata A."/>
            <person name="Hikiji T."/>
            <person name="Kobatake N."/>
            <person name="Inagaki H."/>
            <person name="Ikema Y."/>
            <person name="Okamoto S."/>
            <person name="Okitani R."/>
            <person name="Kawakami T."/>
            <person name="Noguchi S."/>
            <person name="Itoh T."/>
            <person name="Shigeta K."/>
            <person name="Senba T."/>
            <person name="Matsumura K."/>
            <person name="Nakajima Y."/>
            <person name="Mizuno T."/>
            <person name="Morinaga M."/>
            <person name="Sasaki M."/>
            <person name="Togashi T."/>
            <person name="Oyama M."/>
            <person name="Hata H."/>
            <person name="Watanabe M."/>
            <person name="Komatsu T."/>
            <person name="Mizushima-Sugano J."/>
            <person name="Satoh T."/>
            <person name="Shirai Y."/>
            <person name="Takahashi Y."/>
            <person name="Nakagawa K."/>
            <person name="Okumura K."/>
            <person name="Nagase T."/>
            <person name="Nomura N."/>
            <person name="Kikuchi H."/>
            <person name="Masuho Y."/>
            <person name="Yamashita R."/>
            <person name="Nakai K."/>
            <person name="Yada T."/>
            <person name="Nakamura Y."/>
            <person name="Ohara O."/>
            <person name="Isogai T."/>
            <person name="Sugano S."/>
        </authorList>
    </citation>
    <scope>NUCLEOTIDE SEQUENCE [LARGE SCALE MRNA]</scope>
</reference>
<reference key="2">
    <citation type="journal article" date="2004" name="Genome Res.">
        <title>The status, quality, and expansion of the NIH full-length cDNA project: the Mammalian Gene Collection (MGC).</title>
        <authorList>
            <consortium name="The MGC Project Team"/>
        </authorList>
    </citation>
    <scope>NUCLEOTIDE SEQUENCE [LARGE SCALE MRNA]</scope>
</reference>
<reference key="3">
    <citation type="submission" date="1997-09" db="EMBL/GenBank/DDBJ databases">
        <title>Isolation and cloning of novel C2-H2 type zinc finger protein gene in human liver tissue.</title>
        <authorList>
            <person name="Wu G."/>
            <person name="Yu L."/>
            <person name="Sun X."/>
            <person name="Wu M."/>
            <person name="Fan Y."/>
            <person name="Jiang C."/>
            <person name="Zheng Q."/>
            <person name="Zhang Q."/>
            <person name="Zhao S."/>
        </authorList>
    </citation>
    <scope>NUCLEOTIDE SEQUENCE [MRNA] OF 309-361</scope>
    <source>
        <tissue>Liver</tissue>
    </source>
</reference>
<feature type="chain" id="PRO_0000047674" description="Zinc finger protein 583">
    <location>
        <begin position="1"/>
        <end position="569"/>
    </location>
</feature>
<feature type="domain" description="KRAB" evidence="2">
    <location>
        <begin position="6"/>
        <end position="77"/>
    </location>
</feature>
<feature type="zinc finger region" description="C2H2-type 1" evidence="1">
    <location>
        <begin position="212"/>
        <end position="234"/>
    </location>
</feature>
<feature type="zinc finger region" description="C2H2-type 2" evidence="1">
    <location>
        <begin position="240"/>
        <end position="262"/>
    </location>
</feature>
<feature type="zinc finger region" description="C2H2-type 3" evidence="1">
    <location>
        <begin position="268"/>
        <end position="290"/>
    </location>
</feature>
<feature type="zinc finger region" description="C2H2-type 4" evidence="1">
    <location>
        <begin position="296"/>
        <end position="318"/>
    </location>
</feature>
<feature type="zinc finger region" description="C2H2-type 5" evidence="1">
    <location>
        <begin position="324"/>
        <end position="346"/>
    </location>
</feature>
<feature type="zinc finger region" description="C2H2-type 6" evidence="1">
    <location>
        <begin position="352"/>
        <end position="374"/>
    </location>
</feature>
<feature type="zinc finger region" description="C2H2-type 7" evidence="1">
    <location>
        <begin position="380"/>
        <end position="402"/>
    </location>
</feature>
<feature type="zinc finger region" description="C2H2-type 8" evidence="1">
    <location>
        <begin position="408"/>
        <end position="430"/>
    </location>
</feature>
<feature type="zinc finger region" description="C2H2-type 9" evidence="1">
    <location>
        <begin position="436"/>
        <end position="458"/>
    </location>
</feature>
<feature type="zinc finger region" description="C2H2-type 10" evidence="1">
    <location>
        <begin position="464"/>
        <end position="486"/>
    </location>
</feature>
<feature type="zinc finger region" description="C2H2-type 11" evidence="1">
    <location>
        <begin position="492"/>
        <end position="514"/>
    </location>
</feature>
<feature type="zinc finger region" description="C2H2-type 12" evidence="1">
    <location>
        <begin position="520"/>
        <end position="542"/>
    </location>
</feature>
<feature type="region of interest" description="Disordered" evidence="3">
    <location>
        <begin position="549"/>
        <end position="569"/>
    </location>
</feature>
<feature type="compositionally biased region" description="Low complexity" evidence="3">
    <location>
        <begin position="549"/>
        <end position="558"/>
    </location>
</feature>
<feature type="sequence variant" id="VAR_027978" description="In dbSNP:rs12976917.">
    <original>F</original>
    <variation>I</variation>
    <location>
        <position position="324"/>
    </location>
</feature>
<feature type="sequence conflict" description="In Ref. 3; AAB81088." evidence="4" ref="3">
    <original>P</original>
    <variation>R</variation>
    <location>
        <position position="351"/>
    </location>
</feature>
<feature type="sequence conflict" description="In Ref. 1; BAB70964." evidence="4" ref="1">
    <original>S</original>
    <variation>P</variation>
    <location>
        <position position="556"/>
    </location>
</feature>
<comment type="function">
    <text>May be involved in transcriptional regulation.</text>
</comment>
<comment type="subcellular location">
    <subcellularLocation>
        <location evidence="4">Nucleus</location>
    </subcellularLocation>
</comment>
<comment type="similarity">
    <text evidence="4">Belongs to the krueppel C2H2-type zinc-finger protein family.</text>
</comment>
<protein>
    <recommendedName>
        <fullName>Zinc finger protein 583</fullName>
    </recommendedName>
    <alternativeName>
        <fullName>Zinc finger protein L3-5</fullName>
    </alternativeName>
</protein>
<gene>
    <name type="primary">ZNF583</name>
</gene>
<proteinExistence type="evidence at protein level"/>
<evidence type="ECO:0000255" key="1">
    <source>
        <dbReference type="PROSITE-ProRule" id="PRU00042"/>
    </source>
</evidence>
<evidence type="ECO:0000255" key="2">
    <source>
        <dbReference type="PROSITE-ProRule" id="PRU00119"/>
    </source>
</evidence>
<evidence type="ECO:0000256" key="3">
    <source>
        <dbReference type="SAM" id="MobiDB-lite"/>
    </source>
</evidence>
<evidence type="ECO:0000305" key="4"/>